<reference key="1">
    <citation type="submission" date="2004-07" db="EMBL/GenBank/DDBJ databases">
        <authorList>
            <consortium name="NIH - Xenopus Gene Collection (XGC) project"/>
        </authorList>
    </citation>
    <scope>NUCLEOTIDE SEQUENCE [LARGE SCALE MRNA]</scope>
    <source>
        <tissue>Oocyte</tissue>
    </source>
</reference>
<keyword id="KW-1003">Cell membrane</keyword>
<keyword id="KW-0963">Cytoplasm</keyword>
<keyword id="KW-0445">Lipid transport</keyword>
<keyword id="KW-0472">Membrane</keyword>
<keyword id="KW-1185">Reference proteome</keyword>
<keyword id="KW-0813">Transport</keyword>
<gene>
    <name type="primary">tnfaip8l3</name>
</gene>
<sequence length="202" mass="23288">MDTDSGDLSEGELSPGPEQFSSKSFAVQAQKKILSKMATKTMANMLIDDTSSEIFDELFKVTKEYVKNKKEAHKVLKDLVKVAVKVGILYRNKQFSLEELEIVENFRKKLNQTCMTAVSFFEVEYTFDKNVLSGLLHECKTLLHELVQRHLTPKSHSRIDRVFNHFADVEFLTALYSLEGNYRPYLKRICEGVNKLLDERVL</sequence>
<feature type="chain" id="PRO_0000331427" description="Tumor necrosis factor alpha-induced protein 8-like protein 3">
    <location>
        <begin position="1"/>
        <end position="202"/>
    </location>
</feature>
<feature type="region of interest" description="Disordered" evidence="2">
    <location>
        <begin position="1"/>
        <end position="24"/>
    </location>
</feature>
<feature type="compositionally biased region" description="Acidic residues" evidence="2">
    <location>
        <begin position="1"/>
        <end position="10"/>
    </location>
</feature>
<evidence type="ECO:0000250" key="1">
    <source>
        <dbReference type="UniProtKB" id="Q3TBL6"/>
    </source>
</evidence>
<evidence type="ECO:0000256" key="2">
    <source>
        <dbReference type="SAM" id="MobiDB-lite"/>
    </source>
</evidence>
<evidence type="ECO:0000305" key="3"/>
<proteinExistence type="evidence at transcript level"/>
<comment type="function">
    <text evidence="1">May act as a lipid transfer protein.</text>
</comment>
<comment type="subcellular location">
    <subcellularLocation>
        <location evidence="1">Cytoplasm</location>
    </subcellularLocation>
    <subcellularLocation>
        <location evidence="1">Cell membrane</location>
    </subcellularLocation>
</comment>
<comment type="similarity">
    <text evidence="3">Belongs to the TNFAIP8 family.</text>
</comment>
<dbReference type="EMBL" id="BC076797">
    <property type="protein sequence ID" value="AAH76797.1"/>
    <property type="molecule type" value="mRNA"/>
</dbReference>
<dbReference type="RefSeq" id="NP_001086554.1">
    <property type="nucleotide sequence ID" value="NM_001093085.1"/>
</dbReference>
<dbReference type="SMR" id="Q6DFE2"/>
<dbReference type="DNASU" id="446389"/>
<dbReference type="AGR" id="Xenbase:XB-GENE-5763787"/>
<dbReference type="Xenbase" id="XB-GENE-5763787">
    <property type="gene designation" value="tnfaip8l3.S"/>
</dbReference>
<dbReference type="OrthoDB" id="10055976at2759"/>
<dbReference type="Proteomes" id="UP000186698">
    <property type="component" value="Unplaced"/>
</dbReference>
<dbReference type="Bgee" id="446389">
    <property type="expression patterns" value="Expressed in ovary and 10 other cell types or tissues"/>
</dbReference>
<dbReference type="GO" id="GO:0005737">
    <property type="term" value="C:cytoplasm"/>
    <property type="evidence" value="ECO:0000318"/>
    <property type="project" value="GO_Central"/>
</dbReference>
<dbReference type="GO" id="GO:0005886">
    <property type="term" value="C:plasma membrane"/>
    <property type="evidence" value="ECO:0007669"/>
    <property type="project" value="UniProtKB-SubCell"/>
</dbReference>
<dbReference type="GO" id="GO:0006869">
    <property type="term" value="P:lipid transport"/>
    <property type="evidence" value="ECO:0007669"/>
    <property type="project" value="UniProtKB-KW"/>
</dbReference>
<dbReference type="GO" id="GO:0042981">
    <property type="term" value="P:regulation of apoptotic process"/>
    <property type="evidence" value="ECO:0007669"/>
    <property type="project" value="InterPro"/>
</dbReference>
<dbReference type="FunFam" id="1.20.1440.160:FF:000001">
    <property type="entry name" value="Tumor necrosis factor alpha-induced protein 8-like 1"/>
    <property type="match status" value="1"/>
</dbReference>
<dbReference type="Gene3D" id="1.20.1440.160">
    <property type="entry name" value="Tumor necrosis factor alpha-induced protein 8-like"/>
    <property type="match status" value="1"/>
</dbReference>
<dbReference type="InterPro" id="IPR008477">
    <property type="entry name" value="TNFAIP8-like"/>
</dbReference>
<dbReference type="InterPro" id="IPR038355">
    <property type="entry name" value="TNFAIP8_sf"/>
</dbReference>
<dbReference type="PANTHER" id="PTHR12757:SF5">
    <property type="entry name" value="TUMOR NECROSIS FACTOR ALPHA-INDUCED PROTEIN 8-LIKE PROTEIN 3"/>
    <property type="match status" value="1"/>
</dbReference>
<dbReference type="PANTHER" id="PTHR12757">
    <property type="entry name" value="TUMOR NECROSIS FACTOR INDUCED PROTEIN"/>
    <property type="match status" value="1"/>
</dbReference>
<dbReference type="Pfam" id="PF05527">
    <property type="entry name" value="DUF758"/>
    <property type="match status" value="1"/>
</dbReference>
<organism>
    <name type="scientific">Xenopus laevis</name>
    <name type="common">African clawed frog</name>
    <dbReference type="NCBI Taxonomy" id="8355"/>
    <lineage>
        <taxon>Eukaryota</taxon>
        <taxon>Metazoa</taxon>
        <taxon>Chordata</taxon>
        <taxon>Craniata</taxon>
        <taxon>Vertebrata</taxon>
        <taxon>Euteleostomi</taxon>
        <taxon>Amphibia</taxon>
        <taxon>Batrachia</taxon>
        <taxon>Anura</taxon>
        <taxon>Pipoidea</taxon>
        <taxon>Pipidae</taxon>
        <taxon>Xenopodinae</taxon>
        <taxon>Xenopus</taxon>
        <taxon>Xenopus</taxon>
    </lineage>
</organism>
<name>TP8L3_XENLA</name>
<accession>Q6DFE2</accession>
<protein>
    <recommendedName>
        <fullName>Tumor necrosis factor alpha-induced protein 8-like protein 3</fullName>
        <shortName>TNF alpha-induced protein 8-like protein 3</shortName>
        <shortName>TNFAIP8-like protein 3</shortName>
    </recommendedName>
</protein>